<protein>
    <recommendedName>
        <fullName>Transferrin receptor protein 1</fullName>
        <shortName>TR</shortName>
        <shortName>TfR</shortName>
        <shortName>TfR1</shortName>
        <shortName>Trfr</shortName>
    </recommendedName>
    <cdAntigenName>CD71</cdAntigenName>
</protein>
<gene>
    <name type="primary">TFRC</name>
</gene>
<proteinExistence type="evidence at transcript level"/>
<keyword id="KW-1003">Cell membrane</keyword>
<keyword id="KW-1015">Disulfide bond</keyword>
<keyword id="KW-0254">Endocytosis</keyword>
<keyword id="KW-0325">Glycoprotein</keyword>
<keyword id="KW-0449">Lipoprotein</keyword>
<keyword id="KW-0472">Membrane</keyword>
<keyword id="KW-0564">Palmitate</keyword>
<keyword id="KW-0597">Phosphoprotein</keyword>
<keyword id="KW-0675">Receptor</keyword>
<keyword id="KW-1185">Reference proteome</keyword>
<keyword id="KW-0735">Signal-anchor</keyword>
<keyword id="KW-0812">Transmembrane</keyword>
<keyword id="KW-1133">Transmembrane helix</keyword>
<comment type="function">
    <text evidence="2 3">Cellular uptake of iron occurs via receptor-mediated endocytosis of ligand-occupied transferrin receptor into specialized endosomes (By similarity). Endosomal acidification leads to iron release. The apotransferrin-receptor complex is then recycled to the cell surface with a return to neutral pH and the concomitant loss of affinity of apotransferrin for its receptor. Transferrin receptor is necessary for development of erythrocytes and the nervous system (By similarity). Positively regulates T and B cell proliferation through iron uptake (By similarity). Acts as a lipid sensor that regulates mitochondrial fusion by regulating activation of the JNK pathway (By similarity). When dietary levels of stearate (C18:0) are low, promotes activation of the JNK pathway, resulting in HUWE1-mediated ubiquitination and subsequent degradation of the mitofusin MFN2 and inhibition of mitochondrial fusion (By similarity). When dietary levels of stearate (C18:0) are high, TFRC stearoylation inhibits activation of the JNK pathway and thus degradation of the mitofusin MFN2 (By similarity). Mediates uptake of NICOL1 into fibroblasts where it may regulate extracellular matrix production (By similarity).</text>
</comment>
<comment type="subunit">
    <text evidence="1 2">Homodimer; disulfide-linked. Binds one transferrin or HFE molecule per subunit. Interacts with SH3BP4 (By similarity). Interacts with STEAP3; facilitates TFRC endocytosis in erythroid precursor cells (By similarity).</text>
</comment>
<comment type="subcellular location">
    <subcellularLocation>
        <location evidence="2">Cell membrane</location>
        <topology evidence="2">Single-pass type II membrane protein</topology>
    </subcellularLocation>
    <subcellularLocation>
        <location evidence="2">Melanosome</location>
    </subcellularLocation>
</comment>
<comment type="PTM">
    <text evidence="2">Stearoylated by ZDHHC6 which inhibits TFRC-mediated activation of the JNK pathway and promotes mitochondrial fragmentation (By similarity). Stearoylation does not affect iron uptake (By similarity).</text>
</comment>
<comment type="similarity">
    <text evidence="6">Belongs to the peptidase M28 family. M28B subfamily.</text>
</comment>
<name>TFR1_HORSE</name>
<accession>Q2V905</accession>
<dbReference type="EMBL" id="DQ284764">
    <property type="protein sequence ID" value="ABB91380.1"/>
    <property type="molecule type" value="mRNA"/>
</dbReference>
<dbReference type="RefSeq" id="NP_001075382.1">
    <property type="nucleotide sequence ID" value="NM_001081913.1"/>
</dbReference>
<dbReference type="RefSeq" id="XP_005601821.1">
    <property type="nucleotide sequence ID" value="XM_005601764.4"/>
</dbReference>
<dbReference type="RefSeq" id="XP_023478899.1">
    <property type="nucleotide sequence ID" value="XM_023623131.2"/>
</dbReference>
<dbReference type="RefSeq" id="XP_070098453.1">
    <property type="nucleotide sequence ID" value="XM_070242352.1"/>
</dbReference>
<dbReference type="RefSeq" id="XP_070098454.1">
    <property type="nucleotide sequence ID" value="XM_070242353.1"/>
</dbReference>
<dbReference type="SMR" id="Q2V905"/>
<dbReference type="FunCoup" id="Q2V905">
    <property type="interactions" value="779"/>
</dbReference>
<dbReference type="STRING" id="9796.ENSECAP00000021947"/>
<dbReference type="MEROPS" id="M28.972"/>
<dbReference type="GlyCosmos" id="Q2V905">
    <property type="glycosylation" value="4 sites, No reported glycans"/>
</dbReference>
<dbReference type="PaxDb" id="9796-ENSECAP00000021947"/>
<dbReference type="GeneID" id="100034089"/>
<dbReference type="KEGG" id="ecb:100034089"/>
<dbReference type="CTD" id="7037"/>
<dbReference type="HOGENOM" id="CLU_005688_5_0_1"/>
<dbReference type="InParanoid" id="Q2V905"/>
<dbReference type="OMA" id="YQDSNWI"/>
<dbReference type="OrthoDB" id="5841748at2759"/>
<dbReference type="TreeFam" id="TF312981"/>
<dbReference type="Proteomes" id="UP000002281">
    <property type="component" value="Chromosome 19"/>
</dbReference>
<dbReference type="Bgee" id="ENSECAG00000024267">
    <property type="expression patterns" value="Expressed in bone marrow and 23 other cell types or tissues"/>
</dbReference>
<dbReference type="ExpressionAtlas" id="Q2V905">
    <property type="expression patterns" value="baseline"/>
</dbReference>
<dbReference type="GO" id="GO:0009897">
    <property type="term" value="C:external side of plasma membrane"/>
    <property type="evidence" value="ECO:0000318"/>
    <property type="project" value="GO_Central"/>
</dbReference>
<dbReference type="GO" id="GO:0042470">
    <property type="term" value="C:melanosome"/>
    <property type="evidence" value="ECO:0007669"/>
    <property type="project" value="UniProtKB-SubCell"/>
</dbReference>
<dbReference type="GO" id="GO:0004998">
    <property type="term" value="F:transferrin receptor activity"/>
    <property type="evidence" value="ECO:0000250"/>
    <property type="project" value="UniProtKB"/>
</dbReference>
<dbReference type="GO" id="GO:0006879">
    <property type="term" value="P:intracellular iron ion homeostasis"/>
    <property type="evidence" value="ECO:0000318"/>
    <property type="project" value="GO_Central"/>
</dbReference>
<dbReference type="GO" id="GO:0006826">
    <property type="term" value="P:iron ion transport"/>
    <property type="evidence" value="ECO:0000318"/>
    <property type="project" value="GO_Central"/>
</dbReference>
<dbReference type="GO" id="GO:0030890">
    <property type="term" value="P:positive regulation of B cell proliferation"/>
    <property type="evidence" value="ECO:0000250"/>
    <property type="project" value="UniProtKB"/>
</dbReference>
<dbReference type="GO" id="GO:0045830">
    <property type="term" value="P:positive regulation of isotype switching"/>
    <property type="evidence" value="ECO:0000250"/>
    <property type="project" value="UniProtKB"/>
</dbReference>
<dbReference type="GO" id="GO:0042102">
    <property type="term" value="P:positive regulation of T cell proliferation"/>
    <property type="evidence" value="ECO:0000250"/>
    <property type="project" value="UniProtKB"/>
</dbReference>
<dbReference type="GO" id="GO:0031623">
    <property type="term" value="P:receptor internalization"/>
    <property type="evidence" value="ECO:0000250"/>
    <property type="project" value="UniProtKB"/>
</dbReference>
<dbReference type="GO" id="GO:0033572">
    <property type="term" value="P:transferrin transport"/>
    <property type="evidence" value="ECO:0000250"/>
    <property type="project" value="UniProtKB"/>
</dbReference>
<dbReference type="CDD" id="cd09848">
    <property type="entry name" value="M28_TfR"/>
    <property type="match status" value="1"/>
</dbReference>
<dbReference type="CDD" id="cd02128">
    <property type="entry name" value="PA_TfR"/>
    <property type="match status" value="1"/>
</dbReference>
<dbReference type="FunFam" id="1.20.930.40:FF:000002">
    <property type="entry name" value="Transferrin receptor protein 1"/>
    <property type="match status" value="1"/>
</dbReference>
<dbReference type="FunFam" id="3.40.630.10:FF:000045">
    <property type="entry name" value="Transferrin receptor protein 1"/>
    <property type="match status" value="1"/>
</dbReference>
<dbReference type="FunFam" id="3.50.30.30:FF:000010">
    <property type="entry name" value="Transferrin receptor protein 1"/>
    <property type="match status" value="1"/>
</dbReference>
<dbReference type="Gene3D" id="3.50.30.30">
    <property type="match status" value="1"/>
</dbReference>
<dbReference type="Gene3D" id="1.20.930.40">
    <property type="entry name" value="Transferrin receptor-like, dimerisation domain"/>
    <property type="match status" value="1"/>
</dbReference>
<dbReference type="Gene3D" id="3.40.630.10">
    <property type="entry name" value="Zn peptidases"/>
    <property type="match status" value="1"/>
</dbReference>
<dbReference type="InterPro" id="IPR046450">
    <property type="entry name" value="PA_dom_sf"/>
</dbReference>
<dbReference type="InterPro" id="IPR003137">
    <property type="entry name" value="PA_domain"/>
</dbReference>
<dbReference type="InterPro" id="IPR007484">
    <property type="entry name" value="Peptidase_M28"/>
</dbReference>
<dbReference type="InterPro" id="IPR039373">
    <property type="entry name" value="Peptidase_M28B"/>
</dbReference>
<dbReference type="InterPro" id="IPR007365">
    <property type="entry name" value="TFR-like_dimer_dom"/>
</dbReference>
<dbReference type="InterPro" id="IPR036757">
    <property type="entry name" value="TFR-like_dimer_dom_sf"/>
</dbReference>
<dbReference type="InterPro" id="IPR037324">
    <property type="entry name" value="TfR1/2_PA"/>
</dbReference>
<dbReference type="PANTHER" id="PTHR10404">
    <property type="entry name" value="N-ACETYLATED-ALPHA-LINKED ACIDIC DIPEPTIDASE"/>
    <property type="match status" value="1"/>
</dbReference>
<dbReference type="PANTHER" id="PTHR10404:SF26">
    <property type="entry name" value="TRANSFERRIN RECEPTOR PROTEIN 1"/>
    <property type="match status" value="1"/>
</dbReference>
<dbReference type="Pfam" id="PF02225">
    <property type="entry name" value="PA"/>
    <property type="match status" value="1"/>
</dbReference>
<dbReference type="Pfam" id="PF04389">
    <property type="entry name" value="Peptidase_M28"/>
    <property type="match status" value="1"/>
</dbReference>
<dbReference type="Pfam" id="PF04253">
    <property type="entry name" value="TFR_dimer"/>
    <property type="match status" value="1"/>
</dbReference>
<dbReference type="SUPFAM" id="SSF52025">
    <property type="entry name" value="PA domain"/>
    <property type="match status" value="1"/>
</dbReference>
<dbReference type="SUPFAM" id="SSF47672">
    <property type="entry name" value="Transferrin receptor-like dimerisation domain"/>
    <property type="match status" value="1"/>
</dbReference>
<dbReference type="SUPFAM" id="SSF53187">
    <property type="entry name" value="Zn-dependent exopeptidases"/>
    <property type="match status" value="1"/>
</dbReference>
<feature type="chain" id="PRO_0000237615" description="Transferrin receptor protein 1">
    <location>
        <begin position="1"/>
        <end position="767"/>
    </location>
</feature>
<feature type="topological domain" description="Cytoplasmic" evidence="4">
    <location>
        <begin position="1"/>
        <end position="67"/>
    </location>
</feature>
<feature type="transmembrane region" description="Helical; Signal-anchor for type II membrane protein" evidence="4">
    <location>
        <begin position="68"/>
        <end position="88"/>
    </location>
</feature>
<feature type="topological domain" description="Extracellular" evidence="4">
    <location>
        <begin position="89"/>
        <end position="767"/>
    </location>
</feature>
<feature type="domain" description="PA">
    <location>
        <begin position="230"/>
        <end position="320"/>
    </location>
</feature>
<feature type="region of interest" description="Disordered" evidence="5">
    <location>
        <begin position="96"/>
        <end position="122"/>
    </location>
</feature>
<feature type="region of interest" description="Ligand-binding" evidence="1">
    <location>
        <begin position="576"/>
        <end position="767"/>
    </location>
</feature>
<feature type="short sequence motif" description="Endocytosis signal">
    <location>
        <begin position="19"/>
        <end position="22"/>
    </location>
</feature>
<feature type="short sequence motif" description="Stop-transfer sequence">
    <location>
        <begin position="60"/>
        <end position="63"/>
    </location>
</feature>
<feature type="short sequence motif" description="Cell attachment site" evidence="4">
    <location>
        <begin position="653"/>
        <end position="655"/>
    </location>
</feature>
<feature type="compositionally biased region" description="Basic and acidic residues" evidence="5">
    <location>
        <begin position="96"/>
        <end position="110"/>
    </location>
</feature>
<feature type="compositionally biased region" description="Acidic residues" evidence="5">
    <location>
        <begin position="111"/>
        <end position="121"/>
    </location>
</feature>
<feature type="modified residue" description="Phosphoserine" evidence="2">
    <location>
        <position position="9"/>
    </location>
</feature>
<feature type="modified residue" description="Phosphoserine" evidence="3">
    <location>
        <position position="18"/>
    </location>
</feature>
<feature type="modified residue" description="Phosphotyrosine" evidence="2">
    <location>
        <position position="19"/>
    </location>
</feature>
<feature type="modified residue" description="Phosphothreonine" evidence="2">
    <location>
        <position position="20"/>
    </location>
</feature>
<feature type="modified residue" description="Phosphoserine" evidence="2">
    <location>
        <position position="23"/>
    </location>
</feature>
<feature type="lipid moiety-binding region" description="S-palmitoyl cysteine" evidence="1">
    <location>
        <position position="69"/>
    </location>
</feature>
<feature type="glycosylation site" description="N-linked (GlcNAc...) asparagine" evidence="4">
    <location>
        <position position="211"/>
    </location>
</feature>
<feature type="glycosylation site" description="N-linked (GlcNAc...) asparagine" evidence="2">
    <location>
        <position position="258"/>
    </location>
</feature>
<feature type="glycosylation site" description="N-linked (GlcNAc...) asparagine" evidence="2">
    <location>
        <position position="324"/>
    </location>
</feature>
<feature type="glycosylation site" description="N-linked (GlcNAc...) asparagine" evidence="2">
    <location>
        <position position="734"/>
    </location>
</feature>
<feature type="disulfide bond" description="Interchain" evidence="1">
    <location>
        <position position="91"/>
    </location>
</feature>
<feature type="disulfide bond" description="Interchain" evidence="1">
    <location>
        <position position="100"/>
    </location>
</feature>
<reference key="1">
    <citation type="submission" date="2005-11" db="EMBL/GenBank/DDBJ databases">
        <title>Nucleotide sequence of the horse transferrin receptor.</title>
        <authorList>
            <person name="Wills T.L."/>
            <person name="Burnett R.C."/>
            <person name="Olver C.S."/>
        </authorList>
    </citation>
    <scope>NUCLEOTIDE SEQUENCE [MRNA]</scope>
</reference>
<organism>
    <name type="scientific">Equus caballus</name>
    <name type="common">Horse</name>
    <dbReference type="NCBI Taxonomy" id="9796"/>
    <lineage>
        <taxon>Eukaryota</taxon>
        <taxon>Metazoa</taxon>
        <taxon>Chordata</taxon>
        <taxon>Craniata</taxon>
        <taxon>Vertebrata</taxon>
        <taxon>Euteleostomi</taxon>
        <taxon>Mammalia</taxon>
        <taxon>Eutheria</taxon>
        <taxon>Laurasiatheria</taxon>
        <taxon>Perissodactyla</taxon>
        <taxon>Equidae</taxon>
        <taxon>Equus</taxon>
    </lineage>
</organism>
<sequence length="767" mass="85517">MDQARSAFSNLFGGAPLSYTRFSLARQVDGDNSHVEMKLAVDEEENVDNNVRSNHASLTKPKRFNGSFCYAVIAVIIFFLIGFMIGYLGYCKRVEPKSECGRSGDSKEIEGTEPPETEEYFPETPSRLLWTDLRTMLSERLTATEFTNTIKRLNGNSYVPREAGSQKDESLAFFIENQFREFKLNKVWRDEHFVKIQVKGSNAQSSVTVVNGSGDMISLVENPTGYVAYSKATTVTGKLVHANFGTKEDYEALSYPVNGSLVIVRAGEITFAQKVANAESLNAVGVLIYMDQAKFPIVNANLPVFGHAHLGTGDPYTPGFPSFNHTQFPPSQSSGLPNIPVQTISRAAAEALFANMKGDCPSSWKTDSSCRLEFPGDKNVKLTVNNELKEIRIFNVFGVIKGFEEPDRYVVIGAQRDAWGPGAAKSSVGTALLLELARIFSDMVSKGGFKPSRSIVFASWGAGDFGAIGATEWLEGYLSSLHLKAFTYINLDKAVLGAKNFKVSASPLLYSLIEKTMQEVKHPVTGLSLYRDSNWINKVEKLSFDNAAFPFLAYSGIPALSFCFCEDTEYPYLGTTMDTYEVLSQNVPELSRLTRAAAEVAGQLLIKLSYDVELNLNYDMYNDKILSFVKDMNQFRADIKEMGLNLQWLYSARGDFFRATSRLTTDYKNAERANRVVMREINDRIMKVEYHFLSPYVSPRESPFRHIFWGSGSHTLSALLEHLKLRQKNSGAFNETLLRNQLALATWTIQGAANALSGDIWDIDNEF</sequence>
<evidence type="ECO:0000250" key="1"/>
<evidence type="ECO:0000250" key="2">
    <source>
        <dbReference type="UniProtKB" id="P02786"/>
    </source>
</evidence>
<evidence type="ECO:0000250" key="3">
    <source>
        <dbReference type="UniProtKB" id="Q62351"/>
    </source>
</evidence>
<evidence type="ECO:0000255" key="4"/>
<evidence type="ECO:0000256" key="5">
    <source>
        <dbReference type="SAM" id="MobiDB-lite"/>
    </source>
</evidence>
<evidence type="ECO:0000305" key="6"/>